<keyword id="KW-1185">Reference proteome</keyword>
<keyword id="KW-0694">RNA-binding</keyword>
<keyword id="KW-0804">Transcription</keyword>
<keyword id="KW-0889">Transcription antitermination</keyword>
<keyword id="KW-0805">Transcription regulation</keyword>
<name>NUSB_STRP2</name>
<evidence type="ECO:0000255" key="1">
    <source>
        <dbReference type="HAMAP-Rule" id="MF_00073"/>
    </source>
</evidence>
<reference key="1">
    <citation type="journal article" date="2007" name="J. Bacteriol.">
        <title>Genome sequence of Avery's virulent serotype 2 strain D39 of Streptococcus pneumoniae and comparison with that of unencapsulated laboratory strain R6.</title>
        <authorList>
            <person name="Lanie J.A."/>
            <person name="Ng W.-L."/>
            <person name="Kazmierczak K.M."/>
            <person name="Andrzejewski T.M."/>
            <person name="Davidsen T.M."/>
            <person name="Wayne K.J."/>
            <person name="Tettelin H."/>
            <person name="Glass J.I."/>
            <person name="Winkler M.E."/>
        </authorList>
    </citation>
    <scope>NUCLEOTIDE SEQUENCE [LARGE SCALE GENOMIC DNA]</scope>
    <source>
        <strain>D39 / NCTC 7466</strain>
    </source>
</reference>
<gene>
    <name evidence="1" type="primary">nusB</name>
    <name type="ordered locus">SPD_0393</name>
</gene>
<sequence length="140" mass="15964">MTSPLLESRRQLRKCAFQALMSLEFGTDVETACRFAYTHDREDTDVQLPAFLIDLVSGVQAKKEELDKQITQHLKAGWTIERLTLVERNLLRLGVFEITSFDTPQLVAVNEAIELAKDFSDQKSARFINGLLSQFVTEEQ</sequence>
<dbReference type="EMBL" id="CP000410">
    <property type="protein sequence ID" value="ABJ54523.1"/>
    <property type="molecule type" value="Genomic_DNA"/>
</dbReference>
<dbReference type="RefSeq" id="WP_000203654.1">
    <property type="nucleotide sequence ID" value="NZ_JAMLJR010000009.1"/>
</dbReference>
<dbReference type="SMR" id="Q04M45"/>
<dbReference type="PaxDb" id="373153-SPD_0393"/>
<dbReference type="GeneID" id="45652116"/>
<dbReference type="KEGG" id="spd:SPD_0393"/>
<dbReference type="eggNOG" id="COG0781">
    <property type="taxonomic scope" value="Bacteria"/>
</dbReference>
<dbReference type="HOGENOM" id="CLU_087843_3_2_9"/>
<dbReference type="BioCyc" id="SPNE373153:G1G6V-432-MONOMER"/>
<dbReference type="Proteomes" id="UP000001452">
    <property type="component" value="Chromosome"/>
</dbReference>
<dbReference type="GO" id="GO:0005829">
    <property type="term" value="C:cytosol"/>
    <property type="evidence" value="ECO:0007669"/>
    <property type="project" value="TreeGrafter"/>
</dbReference>
<dbReference type="GO" id="GO:0003723">
    <property type="term" value="F:RNA binding"/>
    <property type="evidence" value="ECO:0007669"/>
    <property type="project" value="UniProtKB-UniRule"/>
</dbReference>
<dbReference type="GO" id="GO:0006353">
    <property type="term" value="P:DNA-templated transcription termination"/>
    <property type="evidence" value="ECO:0007669"/>
    <property type="project" value="UniProtKB-UniRule"/>
</dbReference>
<dbReference type="GO" id="GO:0031564">
    <property type="term" value="P:transcription antitermination"/>
    <property type="evidence" value="ECO:0007669"/>
    <property type="project" value="UniProtKB-KW"/>
</dbReference>
<dbReference type="FunFam" id="1.10.940.10:FF:000008">
    <property type="entry name" value="Transcription antitermination protein NusB"/>
    <property type="match status" value="1"/>
</dbReference>
<dbReference type="Gene3D" id="1.10.940.10">
    <property type="entry name" value="NusB-like"/>
    <property type="match status" value="1"/>
</dbReference>
<dbReference type="HAMAP" id="MF_00073">
    <property type="entry name" value="NusB"/>
    <property type="match status" value="1"/>
</dbReference>
<dbReference type="InterPro" id="IPR035926">
    <property type="entry name" value="NusB-like_sf"/>
</dbReference>
<dbReference type="InterPro" id="IPR011605">
    <property type="entry name" value="NusB_fam"/>
</dbReference>
<dbReference type="InterPro" id="IPR006027">
    <property type="entry name" value="NusB_RsmB_TIM44"/>
</dbReference>
<dbReference type="NCBIfam" id="TIGR01951">
    <property type="entry name" value="nusB"/>
    <property type="match status" value="1"/>
</dbReference>
<dbReference type="NCBIfam" id="NF001223">
    <property type="entry name" value="PRK00202.1-1"/>
    <property type="match status" value="1"/>
</dbReference>
<dbReference type="PANTHER" id="PTHR11078:SF3">
    <property type="entry name" value="ANTITERMINATION NUSB DOMAIN-CONTAINING PROTEIN"/>
    <property type="match status" value="1"/>
</dbReference>
<dbReference type="PANTHER" id="PTHR11078">
    <property type="entry name" value="N UTILIZATION SUBSTANCE PROTEIN B-RELATED"/>
    <property type="match status" value="1"/>
</dbReference>
<dbReference type="Pfam" id="PF01029">
    <property type="entry name" value="NusB"/>
    <property type="match status" value="1"/>
</dbReference>
<dbReference type="SUPFAM" id="SSF48013">
    <property type="entry name" value="NusB-like"/>
    <property type="match status" value="1"/>
</dbReference>
<comment type="function">
    <text evidence="1">Involved in transcription antitermination. Required for transcription of ribosomal RNA (rRNA) genes. Binds specifically to the boxA antiterminator sequence of the ribosomal RNA (rrn) operons.</text>
</comment>
<comment type="similarity">
    <text evidence="1">Belongs to the NusB family.</text>
</comment>
<protein>
    <recommendedName>
        <fullName evidence="1">Transcription antitermination protein NusB</fullName>
    </recommendedName>
    <alternativeName>
        <fullName evidence="1">Antitermination factor NusB</fullName>
    </alternativeName>
</protein>
<proteinExistence type="inferred from homology"/>
<accession>Q04M45</accession>
<organism>
    <name type="scientific">Streptococcus pneumoniae serotype 2 (strain D39 / NCTC 7466)</name>
    <dbReference type="NCBI Taxonomy" id="373153"/>
    <lineage>
        <taxon>Bacteria</taxon>
        <taxon>Bacillati</taxon>
        <taxon>Bacillota</taxon>
        <taxon>Bacilli</taxon>
        <taxon>Lactobacillales</taxon>
        <taxon>Streptococcaceae</taxon>
        <taxon>Streptococcus</taxon>
    </lineage>
</organism>
<feature type="chain" id="PRO_1000023779" description="Transcription antitermination protein NusB">
    <location>
        <begin position="1"/>
        <end position="140"/>
    </location>
</feature>